<evidence type="ECO:0000255" key="1">
    <source>
        <dbReference type="HAMAP-Rule" id="MF_02006"/>
    </source>
</evidence>
<sequence length="406" mass="45881">MANVLDTLMERGYIKQFTHEAETRELLEKEKVTFYIGFDPTADSLHVGHFIAMMFMAHMQKAGHRPIALIGGGTATIGDPSGKTDMRKMMTNETIAHNVACIKKQMEKFIDFSDDKAILVNNADWLLNQNYVEFLREVGVHFSVNRMLSAECFKQRLERGLSFLEFNYMLMQGYDFYVLNKKYNCKMELGGDDQWSNMIAGVELVRKKSQESAYAMTCTLLTNSEGQKMGKTVNGALWLDPEKTSPYEFYQYWRNVNDADVEKCLKLLTFIPMDEVRRLSSLEGSQINEAKKVLAFEVTKLVHGEEEATKAQQAAEALFGKGGDMSNVPTYEMGKDKLGAELLDILVEAEIVPSKAEGKRLVKQGGLSLNGEKVADFKKTLEEADFENGEVLIKRGKKNYNKIVLA</sequence>
<keyword id="KW-0030">Aminoacyl-tRNA synthetase</keyword>
<keyword id="KW-0067">ATP-binding</keyword>
<keyword id="KW-0963">Cytoplasm</keyword>
<keyword id="KW-0436">Ligase</keyword>
<keyword id="KW-0547">Nucleotide-binding</keyword>
<keyword id="KW-0648">Protein biosynthesis</keyword>
<keyword id="KW-1185">Reference proteome</keyword>
<keyword id="KW-0694">RNA-binding</keyword>
<dbReference type="EC" id="6.1.1.1" evidence="1"/>
<dbReference type="EMBL" id="BA000016">
    <property type="protein sequence ID" value="BAB80358.1"/>
    <property type="molecule type" value="Genomic_DNA"/>
</dbReference>
<dbReference type="RefSeq" id="WP_003460750.1">
    <property type="nucleotide sequence ID" value="NC_003366.1"/>
</dbReference>
<dbReference type="SMR" id="Q8XMN6"/>
<dbReference type="STRING" id="195102.gene:10489913"/>
<dbReference type="GeneID" id="93003023"/>
<dbReference type="KEGG" id="cpe:CPE0652"/>
<dbReference type="HOGENOM" id="CLU_024003_0_3_9"/>
<dbReference type="Proteomes" id="UP000000818">
    <property type="component" value="Chromosome"/>
</dbReference>
<dbReference type="GO" id="GO:0005829">
    <property type="term" value="C:cytosol"/>
    <property type="evidence" value="ECO:0007669"/>
    <property type="project" value="TreeGrafter"/>
</dbReference>
<dbReference type="GO" id="GO:0005524">
    <property type="term" value="F:ATP binding"/>
    <property type="evidence" value="ECO:0007669"/>
    <property type="project" value="UniProtKB-UniRule"/>
</dbReference>
<dbReference type="GO" id="GO:0003723">
    <property type="term" value="F:RNA binding"/>
    <property type="evidence" value="ECO:0007669"/>
    <property type="project" value="UniProtKB-KW"/>
</dbReference>
<dbReference type="GO" id="GO:0004831">
    <property type="term" value="F:tyrosine-tRNA ligase activity"/>
    <property type="evidence" value="ECO:0007669"/>
    <property type="project" value="UniProtKB-UniRule"/>
</dbReference>
<dbReference type="GO" id="GO:0006437">
    <property type="term" value="P:tyrosyl-tRNA aminoacylation"/>
    <property type="evidence" value="ECO:0007669"/>
    <property type="project" value="UniProtKB-UniRule"/>
</dbReference>
<dbReference type="CDD" id="cd00165">
    <property type="entry name" value="S4"/>
    <property type="match status" value="1"/>
</dbReference>
<dbReference type="CDD" id="cd00805">
    <property type="entry name" value="TyrRS_core"/>
    <property type="match status" value="1"/>
</dbReference>
<dbReference type="FunFam" id="1.10.240.10:FF:000001">
    <property type="entry name" value="Tyrosine--tRNA ligase"/>
    <property type="match status" value="1"/>
</dbReference>
<dbReference type="FunFam" id="3.40.50.620:FF:000008">
    <property type="entry name" value="Tyrosine--tRNA ligase"/>
    <property type="match status" value="1"/>
</dbReference>
<dbReference type="Gene3D" id="3.40.50.620">
    <property type="entry name" value="HUPs"/>
    <property type="match status" value="1"/>
</dbReference>
<dbReference type="Gene3D" id="3.10.290.10">
    <property type="entry name" value="RNA-binding S4 domain"/>
    <property type="match status" value="1"/>
</dbReference>
<dbReference type="Gene3D" id="1.10.240.10">
    <property type="entry name" value="Tyrosyl-Transfer RNA Synthetase"/>
    <property type="match status" value="1"/>
</dbReference>
<dbReference type="HAMAP" id="MF_02006">
    <property type="entry name" value="Tyr_tRNA_synth_type1"/>
    <property type="match status" value="1"/>
</dbReference>
<dbReference type="InterPro" id="IPR001412">
    <property type="entry name" value="aa-tRNA-synth_I_CS"/>
</dbReference>
<dbReference type="InterPro" id="IPR002305">
    <property type="entry name" value="aa-tRNA-synth_Ic"/>
</dbReference>
<dbReference type="InterPro" id="IPR014729">
    <property type="entry name" value="Rossmann-like_a/b/a_fold"/>
</dbReference>
<dbReference type="InterPro" id="IPR036986">
    <property type="entry name" value="S4_RNA-bd_sf"/>
</dbReference>
<dbReference type="InterPro" id="IPR054608">
    <property type="entry name" value="SYY-like_C"/>
</dbReference>
<dbReference type="InterPro" id="IPR002307">
    <property type="entry name" value="Tyr-tRNA-ligase"/>
</dbReference>
<dbReference type="InterPro" id="IPR024088">
    <property type="entry name" value="Tyr-tRNA-ligase_bac-type"/>
</dbReference>
<dbReference type="InterPro" id="IPR024107">
    <property type="entry name" value="Tyr-tRNA-ligase_bac_1"/>
</dbReference>
<dbReference type="NCBIfam" id="TIGR00234">
    <property type="entry name" value="tyrS"/>
    <property type="match status" value="1"/>
</dbReference>
<dbReference type="PANTHER" id="PTHR11766:SF0">
    <property type="entry name" value="TYROSINE--TRNA LIGASE, MITOCHONDRIAL"/>
    <property type="match status" value="1"/>
</dbReference>
<dbReference type="PANTHER" id="PTHR11766">
    <property type="entry name" value="TYROSYL-TRNA SYNTHETASE"/>
    <property type="match status" value="1"/>
</dbReference>
<dbReference type="Pfam" id="PF22421">
    <property type="entry name" value="SYY_C-terminal"/>
    <property type="match status" value="1"/>
</dbReference>
<dbReference type="Pfam" id="PF00579">
    <property type="entry name" value="tRNA-synt_1b"/>
    <property type="match status" value="1"/>
</dbReference>
<dbReference type="PRINTS" id="PR01040">
    <property type="entry name" value="TRNASYNTHTYR"/>
</dbReference>
<dbReference type="SUPFAM" id="SSF55174">
    <property type="entry name" value="Alpha-L RNA-binding motif"/>
    <property type="match status" value="1"/>
</dbReference>
<dbReference type="SUPFAM" id="SSF52374">
    <property type="entry name" value="Nucleotidylyl transferase"/>
    <property type="match status" value="1"/>
</dbReference>
<dbReference type="PROSITE" id="PS00178">
    <property type="entry name" value="AA_TRNA_LIGASE_I"/>
    <property type="match status" value="1"/>
</dbReference>
<dbReference type="PROSITE" id="PS50889">
    <property type="entry name" value="S4"/>
    <property type="match status" value="1"/>
</dbReference>
<comment type="function">
    <text evidence="1">Catalyzes the attachment of tyrosine to tRNA(Tyr) in a two-step reaction: tyrosine is first activated by ATP to form Tyr-AMP and then transferred to the acceptor end of tRNA(Tyr).</text>
</comment>
<comment type="catalytic activity">
    <reaction evidence="1">
        <text>tRNA(Tyr) + L-tyrosine + ATP = L-tyrosyl-tRNA(Tyr) + AMP + diphosphate + H(+)</text>
        <dbReference type="Rhea" id="RHEA:10220"/>
        <dbReference type="Rhea" id="RHEA-COMP:9706"/>
        <dbReference type="Rhea" id="RHEA-COMP:9707"/>
        <dbReference type="ChEBI" id="CHEBI:15378"/>
        <dbReference type="ChEBI" id="CHEBI:30616"/>
        <dbReference type="ChEBI" id="CHEBI:33019"/>
        <dbReference type="ChEBI" id="CHEBI:58315"/>
        <dbReference type="ChEBI" id="CHEBI:78442"/>
        <dbReference type="ChEBI" id="CHEBI:78536"/>
        <dbReference type="ChEBI" id="CHEBI:456215"/>
        <dbReference type="EC" id="6.1.1.1"/>
    </reaction>
</comment>
<comment type="subunit">
    <text evidence="1">Homodimer.</text>
</comment>
<comment type="subcellular location">
    <subcellularLocation>
        <location evidence="1">Cytoplasm</location>
    </subcellularLocation>
</comment>
<comment type="similarity">
    <text evidence="1">Belongs to the class-I aminoacyl-tRNA synthetase family. TyrS type 1 subfamily.</text>
</comment>
<reference key="1">
    <citation type="journal article" date="2002" name="Proc. Natl. Acad. Sci. U.S.A.">
        <title>Complete genome sequence of Clostridium perfringens, an anaerobic flesh-eater.</title>
        <authorList>
            <person name="Shimizu T."/>
            <person name="Ohtani K."/>
            <person name="Hirakawa H."/>
            <person name="Ohshima K."/>
            <person name="Yamashita A."/>
            <person name="Shiba T."/>
            <person name="Ogasawara N."/>
            <person name="Hattori M."/>
            <person name="Kuhara S."/>
            <person name="Hayashi H."/>
        </authorList>
    </citation>
    <scope>NUCLEOTIDE SEQUENCE [LARGE SCALE GENOMIC DNA]</scope>
    <source>
        <strain>13 / Type A</strain>
    </source>
</reference>
<organism>
    <name type="scientific">Clostridium perfringens (strain 13 / Type A)</name>
    <dbReference type="NCBI Taxonomy" id="195102"/>
    <lineage>
        <taxon>Bacteria</taxon>
        <taxon>Bacillati</taxon>
        <taxon>Bacillota</taxon>
        <taxon>Clostridia</taxon>
        <taxon>Eubacteriales</taxon>
        <taxon>Clostridiaceae</taxon>
        <taxon>Clostridium</taxon>
    </lineage>
</organism>
<proteinExistence type="inferred from homology"/>
<accession>Q8XMN6</accession>
<name>SYY_CLOPE</name>
<feature type="chain" id="PRO_0000234698" description="Tyrosine--tRNA ligase">
    <location>
        <begin position="1"/>
        <end position="406"/>
    </location>
</feature>
<feature type="domain" description="S4 RNA-binding" evidence="1">
    <location>
        <begin position="340"/>
        <end position="404"/>
    </location>
</feature>
<feature type="short sequence motif" description="'HIGH' region">
    <location>
        <begin position="40"/>
        <end position="49"/>
    </location>
</feature>
<feature type="short sequence motif" description="'KMSKS' region">
    <location>
        <begin position="228"/>
        <end position="232"/>
    </location>
</feature>
<feature type="binding site" evidence="1">
    <location>
        <position position="35"/>
    </location>
    <ligand>
        <name>L-tyrosine</name>
        <dbReference type="ChEBI" id="CHEBI:58315"/>
    </ligand>
</feature>
<feature type="binding site" evidence="1">
    <location>
        <position position="168"/>
    </location>
    <ligand>
        <name>L-tyrosine</name>
        <dbReference type="ChEBI" id="CHEBI:58315"/>
    </ligand>
</feature>
<feature type="binding site" evidence="1">
    <location>
        <position position="172"/>
    </location>
    <ligand>
        <name>L-tyrosine</name>
        <dbReference type="ChEBI" id="CHEBI:58315"/>
    </ligand>
</feature>
<feature type="binding site" evidence="1">
    <location>
        <position position="231"/>
    </location>
    <ligand>
        <name>ATP</name>
        <dbReference type="ChEBI" id="CHEBI:30616"/>
    </ligand>
</feature>
<gene>
    <name evidence="1" type="primary">tyrS</name>
    <name type="ordered locus">CPE0652</name>
</gene>
<protein>
    <recommendedName>
        <fullName evidence="1">Tyrosine--tRNA ligase</fullName>
        <ecNumber evidence="1">6.1.1.1</ecNumber>
    </recommendedName>
    <alternativeName>
        <fullName evidence="1">Tyrosyl-tRNA synthetase</fullName>
        <shortName evidence="1">TyrRS</shortName>
    </alternativeName>
</protein>